<keyword id="KW-0488">Methylation</keyword>
<keyword id="KW-1185">Reference proteome</keyword>
<keyword id="KW-0687">Ribonucleoprotein</keyword>
<keyword id="KW-0689">Ribosomal protein</keyword>
<keyword id="KW-0694">RNA-binding</keyword>
<keyword id="KW-0699">rRNA-binding</keyword>
<name>RL11_BRASB</name>
<accession>A5ELP2</accession>
<gene>
    <name evidence="1" type="primary">rplK</name>
    <name type="ordered locus">BBta_5087</name>
</gene>
<proteinExistence type="inferred from homology"/>
<sequence length="142" mass="15338">MAKKVTGYLKLQVPAGAANPSPPIGPALGQRGLNIMEFCKAFNAQTQKEEKNTPIPVVITIYADRSFTFEMKTPPMSYFLKQAAKIQSGSKAPGRDKAGKVTKAQVREIAEKKMKDLNCDSIESAMKMVEGSARSMGLEVAG</sequence>
<protein>
    <recommendedName>
        <fullName evidence="1">Large ribosomal subunit protein uL11</fullName>
    </recommendedName>
    <alternativeName>
        <fullName evidence="2">50S ribosomal protein L11</fullName>
    </alternativeName>
</protein>
<feature type="chain" id="PRO_1000046146" description="Large ribosomal subunit protein uL11">
    <location>
        <begin position="1"/>
        <end position="142"/>
    </location>
</feature>
<evidence type="ECO:0000255" key="1">
    <source>
        <dbReference type="HAMAP-Rule" id="MF_00736"/>
    </source>
</evidence>
<evidence type="ECO:0000305" key="2"/>
<comment type="function">
    <text evidence="1">Forms part of the ribosomal stalk which helps the ribosome interact with GTP-bound translation factors.</text>
</comment>
<comment type="subunit">
    <text evidence="1">Part of the ribosomal stalk of the 50S ribosomal subunit. Interacts with L10 and the large rRNA to form the base of the stalk. L10 forms an elongated spine to which L12 dimers bind in a sequential fashion forming a multimeric L10(L12)X complex.</text>
</comment>
<comment type="PTM">
    <text evidence="1">One or more lysine residues are methylated.</text>
</comment>
<comment type="similarity">
    <text evidence="1">Belongs to the universal ribosomal protein uL11 family.</text>
</comment>
<reference key="1">
    <citation type="journal article" date="2007" name="Science">
        <title>Legumes symbioses: absence of nod genes in photosynthetic bradyrhizobia.</title>
        <authorList>
            <person name="Giraud E."/>
            <person name="Moulin L."/>
            <person name="Vallenet D."/>
            <person name="Barbe V."/>
            <person name="Cytryn E."/>
            <person name="Avarre J.-C."/>
            <person name="Jaubert M."/>
            <person name="Simon D."/>
            <person name="Cartieaux F."/>
            <person name="Prin Y."/>
            <person name="Bena G."/>
            <person name="Hannibal L."/>
            <person name="Fardoux J."/>
            <person name="Kojadinovic M."/>
            <person name="Vuillet L."/>
            <person name="Lajus A."/>
            <person name="Cruveiller S."/>
            <person name="Rouy Z."/>
            <person name="Mangenot S."/>
            <person name="Segurens B."/>
            <person name="Dossat C."/>
            <person name="Franck W.L."/>
            <person name="Chang W.-S."/>
            <person name="Saunders E."/>
            <person name="Bruce D."/>
            <person name="Richardson P."/>
            <person name="Normand P."/>
            <person name="Dreyfus B."/>
            <person name="Pignol D."/>
            <person name="Stacey G."/>
            <person name="Emerich D."/>
            <person name="Vermeglio A."/>
            <person name="Medigue C."/>
            <person name="Sadowsky M."/>
        </authorList>
    </citation>
    <scope>NUCLEOTIDE SEQUENCE [LARGE SCALE GENOMIC DNA]</scope>
    <source>
        <strain>BTAi1 / ATCC BAA-1182</strain>
    </source>
</reference>
<organism>
    <name type="scientific">Bradyrhizobium sp. (strain BTAi1 / ATCC BAA-1182)</name>
    <dbReference type="NCBI Taxonomy" id="288000"/>
    <lineage>
        <taxon>Bacteria</taxon>
        <taxon>Pseudomonadati</taxon>
        <taxon>Pseudomonadota</taxon>
        <taxon>Alphaproteobacteria</taxon>
        <taxon>Hyphomicrobiales</taxon>
        <taxon>Nitrobacteraceae</taxon>
        <taxon>Bradyrhizobium</taxon>
    </lineage>
</organism>
<dbReference type="EMBL" id="CP000494">
    <property type="protein sequence ID" value="ABQ37086.1"/>
    <property type="molecule type" value="Genomic_DNA"/>
</dbReference>
<dbReference type="RefSeq" id="WP_012045056.1">
    <property type="nucleotide sequence ID" value="NC_009485.1"/>
</dbReference>
<dbReference type="SMR" id="A5ELP2"/>
<dbReference type="STRING" id="288000.BBta_5087"/>
<dbReference type="KEGG" id="bbt:BBta_5087"/>
<dbReference type="eggNOG" id="COG0080">
    <property type="taxonomic scope" value="Bacteria"/>
</dbReference>
<dbReference type="HOGENOM" id="CLU_074237_2_1_5"/>
<dbReference type="OrthoDB" id="9802408at2"/>
<dbReference type="Proteomes" id="UP000000246">
    <property type="component" value="Chromosome"/>
</dbReference>
<dbReference type="GO" id="GO:0022625">
    <property type="term" value="C:cytosolic large ribosomal subunit"/>
    <property type="evidence" value="ECO:0007669"/>
    <property type="project" value="TreeGrafter"/>
</dbReference>
<dbReference type="GO" id="GO:0070180">
    <property type="term" value="F:large ribosomal subunit rRNA binding"/>
    <property type="evidence" value="ECO:0007669"/>
    <property type="project" value="UniProtKB-UniRule"/>
</dbReference>
<dbReference type="GO" id="GO:0003735">
    <property type="term" value="F:structural constituent of ribosome"/>
    <property type="evidence" value="ECO:0007669"/>
    <property type="project" value="InterPro"/>
</dbReference>
<dbReference type="GO" id="GO:0006412">
    <property type="term" value="P:translation"/>
    <property type="evidence" value="ECO:0007669"/>
    <property type="project" value="UniProtKB-UniRule"/>
</dbReference>
<dbReference type="CDD" id="cd00349">
    <property type="entry name" value="Ribosomal_L11"/>
    <property type="match status" value="1"/>
</dbReference>
<dbReference type="FunFam" id="1.10.10.250:FF:000001">
    <property type="entry name" value="50S ribosomal protein L11"/>
    <property type="match status" value="1"/>
</dbReference>
<dbReference type="FunFam" id="3.30.1550.10:FF:000001">
    <property type="entry name" value="50S ribosomal protein L11"/>
    <property type="match status" value="1"/>
</dbReference>
<dbReference type="Gene3D" id="1.10.10.250">
    <property type="entry name" value="Ribosomal protein L11, C-terminal domain"/>
    <property type="match status" value="1"/>
</dbReference>
<dbReference type="Gene3D" id="3.30.1550.10">
    <property type="entry name" value="Ribosomal protein L11/L12, N-terminal domain"/>
    <property type="match status" value="1"/>
</dbReference>
<dbReference type="HAMAP" id="MF_00736">
    <property type="entry name" value="Ribosomal_uL11"/>
    <property type="match status" value="1"/>
</dbReference>
<dbReference type="InterPro" id="IPR000911">
    <property type="entry name" value="Ribosomal_uL11"/>
</dbReference>
<dbReference type="InterPro" id="IPR006519">
    <property type="entry name" value="Ribosomal_uL11_bac-typ"/>
</dbReference>
<dbReference type="InterPro" id="IPR020783">
    <property type="entry name" value="Ribosomal_uL11_C"/>
</dbReference>
<dbReference type="InterPro" id="IPR036769">
    <property type="entry name" value="Ribosomal_uL11_C_sf"/>
</dbReference>
<dbReference type="InterPro" id="IPR020785">
    <property type="entry name" value="Ribosomal_uL11_CS"/>
</dbReference>
<dbReference type="InterPro" id="IPR020784">
    <property type="entry name" value="Ribosomal_uL11_N"/>
</dbReference>
<dbReference type="InterPro" id="IPR036796">
    <property type="entry name" value="Ribosomal_uL11_N_sf"/>
</dbReference>
<dbReference type="NCBIfam" id="TIGR01632">
    <property type="entry name" value="L11_bact"/>
    <property type="match status" value="1"/>
</dbReference>
<dbReference type="PANTHER" id="PTHR11661">
    <property type="entry name" value="60S RIBOSOMAL PROTEIN L12"/>
    <property type="match status" value="1"/>
</dbReference>
<dbReference type="PANTHER" id="PTHR11661:SF1">
    <property type="entry name" value="LARGE RIBOSOMAL SUBUNIT PROTEIN UL11M"/>
    <property type="match status" value="1"/>
</dbReference>
<dbReference type="Pfam" id="PF00298">
    <property type="entry name" value="Ribosomal_L11"/>
    <property type="match status" value="1"/>
</dbReference>
<dbReference type="Pfam" id="PF03946">
    <property type="entry name" value="Ribosomal_L11_N"/>
    <property type="match status" value="1"/>
</dbReference>
<dbReference type="SMART" id="SM00649">
    <property type="entry name" value="RL11"/>
    <property type="match status" value="1"/>
</dbReference>
<dbReference type="SUPFAM" id="SSF54747">
    <property type="entry name" value="Ribosomal L11/L12e N-terminal domain"/>
    <property type="match status" value="1"/>
</dbReference>
<dbReference type="SUPFAM" id="SSF46906">
    <property type="entry name" value="Ribosomal protein L11, C-terminal domain"/>
    <property type="match status" value="1"/>
</dbReference>
<dbReference type="PROSITE" id="PS00359">
    <property type="entry name" value="RIBOSOMAL_L11"/>
    <property type="match status" value="1"/>
</dbReference>